<name>PRP38_DROME</name>
<keyword id="KW-0507">mRNA processing</keyword>
<keyword id="KW-0508">mRNA splicing</keyword>
<keyword id="KW-0539">Nucleus</keyword>
<keyword id="KW-1185">Reference proteome</keyword>
<keyword id="KW-0747">Spliceosome</keyword>
<reference evidence="9" key="1">
    <citation type="journal article" date="2000" name="Science">
        <title>The genome sequence of Drosophila melanogaster.</title>
        <authorList>
            <person name="Adams M.D."/>
            <person name="Celniker S.E."/>
            <person name="Holt R.A."/>
            <person name="Evans C.A."/>
            <person name="Gocayne J.D."/>
            <person name="Amanatides P.G."/>
            <person name="Scherer S.E."/>
            <person name="Li P.W."/>
            <person name="Hoskins R.A."/>
            <person name="Galle R.F."/>
            <person name="George R.A."/>
            <person name="Lewis S.E."/>
            <person name="Richards S."/>
            <person name="Ashburner M."/>
            <person name="Henderson S.N."/>
            <person name="Sutton G.G."/>
            <person name="Wortman J.R."/>
            <person name="Yandell M.D."/>
            <person name="Zhang Q."/>
            <person name="Chen L.X."/>
            <person name="Brandon R.C."/>
            <person name="Rogers Y.-H.C."/>
            <person name="Blazej R.G."/>
            <person name="Champe M."/>
            <person name="Pfeiffer B.D."/>
            <person name="Wan K.H."/>
            <person name="Doyle C."/>
            <person name="Baxter E.G."/>
            <person name="Helt G."/>
            <person name="Nelson C.R."/>
            <person name="Miklos G.L.G."/>
            <person name="Abril J.F."/>
            <person name="Agbayani A."/>
            <person name="An H.-J."/>
            <person name="Andrews-Pfannkoch C."/>
            <person name="Baldwin D."/>
            <person name="Ballew R.M."/>
            <person name="Basu A."/>
            <person name="Baxendale J."/>
            <person name="Bayraktaroglu L."/>
            <person name="Beasley E.M."/>
            <person name="Beeson K.Y."/>
            <person name="Benos P.V."/>
            <person name="Berman B.P."/>
            <person name="Bhandari D."/>
            <person name="Bolshakov S."/>
            <person name="Borkova D."/>
            <person name="Botchan M.R."/>
            <person name="Bouck J."/>
            <person name="Brokstein P."/>
            <person name="Brottier P."/>
            <person name="Burtis K.C."/>
            <person name="Busam D.A."/>
            <person name="Butler H."/>
            <person name="Cadieu E."/>
            <person name="Center A."/>
            <person name="Chandra I."/>
            <person name="Cherry J.M."/>
            <person name="Cawley S."/>
            <person name="Dahlke C."/>
            <person name="Davenport L.B."/>
            <person name="Davies P."/>
            <person name="de Pablos B."/>
            <person name="Delcher A."/>
            <person name="Deng Z."/>
            <person name="Mays A.D."/>
            <person name="Dew I."/>
            <person name="Dietz S.M."/>
            <person name="Dodson K."/>
            <person name="Doup L.E."/>
            <person name="Downes M."/>
            <person name="Dugan-Rocha S."/>
            <person name="Dunkov B.C."/>
            <person name="Dunn P."/>
            <person name="Durbin K.J."/>
            <person name="Evangelista C.C."/>
            <person name="Ferraz C."/>
            <person name="Ferriera S."/>
            <person name="Fleischmann W."/>
            <person name="Fosler C."/>
            <person name="Gabrielian A.E."/>
            <person name="Garg N.S."/>
            <person name="Gelbart W.M."/>
            <person name="Glasser K."/>
            <person name="Glodek A."/>
            <person name="Gong F."/>
            <person name="Gorrell J.H."/>
            <person name="Gu Z."/>
            <person name="Guan P."/>
            <person name="Harris M."/>
            <person name="Harris N.L."/>
            <person name="Harvey D.A."/>
            <person name="Heiman T.J."/>
            <person name="Hernandez J.R."/>
            <person name="Houck J."/>
            <person name="Hostin D."/>
            <person name="Houston K.A."/>
            <person name="Howland T.J."/>
            <person name="Wei M.-H."/>
            <person name="Ibegwam C."/>
            <person name="Jalali M."/>
            <person name="Kalush F."/>
            <person name="Karpen G.H."/>
            <person name="Ke Z."/>
            <person name="Kennison J.A."/>
            <person name="Ketchum K.A."/>
            <person name="Kimmel B.E."/>
            <person name="Kodira C.D."/>
            <person name="Kraft C.L."/>
            <person name="Kravitz S."/>
            <person name="Kulp D."/>
            <person name="Lai Z."/>
            <person name="Lasko P."/>
            <person name="Lei Y."/>
            <person name="Levitsky A.A."/>
            <person name="Li J.H."/>
            <person name="Li Z."/>
            <person name="Liang Y."/>
            <person name="Lin X."/>
            <person name="Liu X."/>
            <person name="Mattei B."/>
            <person name="McIntosh T.C."/>
            <person name="McLeod M.P."/>
            <person name="McPherson D."/>
            <person name="Merkulov G."/>
            <person name="Milshina N.V."/>
            <person name="Mobarry C."/>
            <person name="Morris J."/>
            <person name="Moshrefi A."/>
            <person name="Mount S.M."/>
            <person name="Moy M."/>
            <person name="Murphy B."/>
            <person name="Murphy L."/>
            <person name="Muzny D.M."/>
            <person name="Nelson D.L."/>
            <person name="Nelson D.R."/>
            <person name="Nelson K.A."/>
            <person name="Nixon K."/>
            <person name="Nusskern D.R."/>
            <person name="Pacleb J.M."/>
            <person name="Palazzolo M."/>
            <person name="Pittman G.S."/>
            <person name="Pan S."/>
            <person name="Pollard J."/>
            <person name="Puri V."/>
            <person name="Reese M.G."/>
            <person name="Reinert K."/>
            <person name="Remington K."/>
            <person name="Saunders R.D.C."/>
            <person name="Scheeler F."/>
            <person name="Shen H."/>
            <person name="Shue B.C."/>
            <person name="Siden-Kiamos I."/>
            <person name="Simpson M."/>
            <person name="Skupski M.P."/>
            <person name="Smith T.J."/>
            <person name="Spier E."/>
            <person name="Spradling A.C."/>
            <person name="Stapleton M."/>
            <person name="Strong R."/>
            <person name="Sun E."/>
            <person name="Svirskas R."/>
            <person name="Tector C."/>
            <person name="Turner R."/>
            <person name="Venter E."/>
            <person name="Wang A.H."/>
            <person name="Wang X."/>
            <person name="Wang Z.-Y."/>
            <person name="Wassarman D.A."/>
            <person name="Weinstock G.M."/>
            <person name="Weissenbach J."/>
            <person name="Williams S.M."/>
            <person name="Woodage T."/>
            <person name="Worley K.C."/>
            <person name="Wu D."/>
            <person name="Yang S."/>
            <person name="Yao Q.A."/>
            <person name="Ye J."/>
            <person name="Yeh R.-F."/>
            <person name="Zaveri J.S."/>
            <person name="Zhan M."/>
            <person name="Zhang G."/>
            <person name="Zhao Q."/>
            <person name="Zheng L."/>
            <person name="Zheng X.H."/>
            <person name="Zhong F.N."/>
            <person name="Zhong W."/>
            <person name="Zhou X."/>
            <person name="Zhu S.C."/>
            <person name="Zhu X."/>
            <person name="Smith H.O."/>
            <person name="Gibbs R.A."/>
            <person name="Myers E.W."/>
            <person name="Rubin G.M."/>
            <person name="Venter J.C."/>
        </authorList>
    </citation>
    <scope>NUCLEOTIDE SEQUENCE [LARGE SCALE GENOMIC DNA]</scope>
    <source>
        <strain evidence="9">Berkeley</strain>
    </source>
</reference>
<reference evidence="9" key="2">
    <citation type="journal article" date="2002" name="Genome Biol.">
        <title>Annotation of the Drosophila melanogaster euchromatic genome: a systematic review.</title>
        <authorList>
            <person name="Misra S."/>
            <person name="Crosby M.A."/>
            <person name="Mungall C.J."/>
            <person name="Matthews B.B."/>
            <person name="Campbell K.S."/>
            <person name="Hradecky P."/>
            <person name="Huang Y."/>
            <person name="Kaminker J.S."/>
            <person name="Millburn G.H."/>
            <person name="Prochnik S.E."/>
            <person name="Smith C.D."/>
            <person name="Tupy J.L."/>
            <person name="Whitfield E.J."/>
            <person name="Bayraktaroglu L."/>
            <person name="Berman B.P."/>
            <person name="Bettencourt B.R."/>
            <person name="Celniker S.E."/>
            <person name="de Grey A.D.N.J."/>
            <person name="Drysdale R.A."/>
            <person name="Harris N.L."/>
            <person name="Richter J."/>
            <person name="Russo S."/>
            <person name="Schroeder A.J."/>
            <person name="Shu S.Q."/>
            <person name="Stapleton M."/>
            <person name="Yamada C."/>
            <person name="Ashburner M."/>
            <person name="Gelbart W.M."/>
            <person name="Rubin G.M."/>
            <person name="Lewis S.E."/>
        </authorList>
    </citation>
    <scope>GENOME REANNOTATION</scope>
    <source>
        <strain evidence="9">Berkeley</strain>
    </source>
</reference>
<reference evidence="7" key="3">
    <citation type="journal article" date="2002" name="Genome Biol.">
        <title>A Drosophila full-length cDNA resource.</title>
        <authorList>
            <person name="Stapleton M."/>
            <person name="Carlson J.W."/>
            <person name="Brokstein P."/>
            <person name="Yu C."/>
            <person name="Champe M."/>
            <person name="George R.A."/>
            <person name="Guarin H."/>
            <person name="Kronmiller B."/>
            <person name="Pacleb J.M."/>
            <person name="Park S."/>
            <person name="Wan K.H."/>
            <person name="Rubin G.M."/>
            <person name="Celniker S.E."/>
        </authorList>
    </citation>
    <scope>NUCLEOTIDE SEQUENCE [LARGE SCALE MRNA]</scope>
    <source>
        <strain evidence="7">Berkeley</strain>
        <tissue evidence="7">Ovary</tissue>
    </source>
</reference>
<reference evidence="5" key="4">
    <citation type="journal article" date="2008" name="J. Biol. Chem.">
        <title>Drosophila MFAP1 is required for pre-mRNA processing and G2/M progression.</title>
        <authorList>
            <person name="Andersen D.S."/>
            <person name="Tapon N."/>
        </authorList>
    </citation>
    <scope>FUNCTION</scope>
    <scope>INTERACTION WITH MFAP1</scope>
    <scope>SUBCELLULAR LOCATION</scope>
</reference>
<reference evidence="5" key="5">
    <citation type="journal article" date="2009" name="Mol. Cell. Biol.">
        <title>Conservation of the protein composition and electron microscopy structure of Drosophila melanogaster and human spliceosomal complexes.</title>
        <authorList>
            <person name="Herold N."/>
            <person name="Will C.L."/>
            <person name="Wolf E."/>
            <person name="Kastner B."/>
            <person name="Urlaub H."/>
            <person name="Luhrmann R."/>
        </authorList>
    </citation>
    <scope>IDENTIFICATION BY MASS SPECTROMETRY</scope>
    <scope>FUNCTION</scope>
    <scope>IDENTIFICATION IN THE SPLICEOSOME C COMPLEX</scope>
    <scope>SUBCELLULAR LOCATION</scope>
</reference>
<reference key="6">
    <citation type="journal article" date="2013" name="PLoS ONE">
        <title>Prp22 and spliceosome components regulate chromatin dynamics in germ-line polyploid cells.</title>
        <authorList>
            <person name="Klusza S."/>
            <person name="Novak A."/>
            <person name="Figueroa S."/>
            <person name="Palmer W."/>
            <person name="Deng W.M."/>
        </authorList>
    </citation>
    <scope>SUBCELLULAR LOCATION</scope>
    <scope>TISSUE SPECIFICITY</scope>
</reference>
<feature type="chain" id="PRO_0000438524" description="Pre-mRNA-splicing factor 38">
    <location>
        <begin position="1"/>
        <end position="330"/>
    </location>
</feature>
<feature type="region of interest" description="Disordered" evidence="1">
    <location>
        <begin position="182"/>
        <end position="330"/>
    </location>
</feature>
<feature type="compositionally biased region" description="Acidic residues" evidence="1">
    <location>
        <begin position="184"/>
        <end position="199"/>
    </location>
</feature>
<feature type="compositionally biased region" description="Basic residues" evidence="1">
    <location>
        <begin position="213"/>
        <end position="224"/>
    </location>
</feature>
<feature type="compositionally biased region" description="Basic and acidic residues" evidence="1">
    <location>
        <begin position="240"/>
        <end position="330"/>
    </location>
</feature>
<sequence length="330" mass="40088">MANRTVKEAKNVHGTNPQYLIEKIIRSRIYDSKYWKEQCFALTAELLVDKAMELRFVGGVYGGNIKPTQFLCLTLKMLQIQPEKDIVVEFIKNEEFKYVRALGAFYLRLTGAALDCYKYLEPLYIDNRKLRRQNRAGQFEIVYMDEYIDELLRNDRVCDIILPRIQKRSILEENNEIEPKVSVLDEDLDDELPSDEEKADETNRPKENSTAVRRPRRVRSKSRSRSRERERRSGQGNSARSRDYYDELEDYDRQRNRVRNRDTHNEDYDRRQNNGRHDRERERQDRDSIRERERDGDRDRRDRERERERDRGRHDQRERDSRGERDRRRY</sequence>
<protein>
    <recommendedName>
        <fullName evidence="5">Pre-mRNA-splicing factor 38</fullName>
    </recommendedName>
</protein>
<gene>
    <name evidence="8" type="primary">Prp38</name>
    <name evidence="8" type="ORF">CG30342</name>
</gene>
<proteinExistence type="evidence at protein level"/>
<dbReference type="EMBL" id="AE013599">
    <property type="protein sequence ID" value="AAF58976.3"/>
    <property type="molecule type" value="Genomic_DNA"/>
</dbReference>
<dbReference type="EMBL" id="AY118843">
    <property type="protein sequence ID" value="AAM50703.1"/>
    <property type="molecule type" value="mRNA"/>
</dbReference>
<dbReference type="RefSeq" id="NP_610463.2">
    <property type="nucleotide sequence ID" value="NM_136619.3"/>
</dbReference>
<dbReference type="SMR" id="Q7JVL3"/>
<dbReference type="FunCoup" id="Q7JVL3">
    <property type="interactions" value="1732"/>
</dbReference>
<dbReference type="IntAct" id="Q7JVL3">
    <property type="interactions" value="4"/>
</dbReference>
<dbReference type="STRING" id="7227.FBpp0087663"/>
<dbReference type="PaxDb" id="7227-FBpp0087663"/>
<dbReference type="DNASU" id="35934"/>
<dbReference type="EnsemblMetazoa" id="FBtr0088582">
    <property type="protein sequence ID" value="FBpp0087663"/>
    <property type="gene ID" value="FBgn0050342"/>
</dbReference>
<dbReference type="GeneID" id="35934"/>
<dbReference type="KEGG" id="dme:Dmel_CG30342"/>
<dbReference type="UCSC" id="CG30342-RA">
    <property type="organism name" value="d. melanogaster"/>
</dbReference>
<dbReference type="AGR" id="FB:FBgn0050342"/>
<dbReference type="CTD" id="35934"/>
<dbReference type="FlyBase" id="FBgn0050342">
    <property type="gene designation" value="Prp38"/>
</dbReference>
<dbReference type="VEuPathDB" id="VectorBase:FBgn0050342"/>
<dbReference type="eggNOG" id="KOG2889">
    <property type="taxonomic scope" value="Eukaryota"/>
</dbReference>
<dbReference type="GeneTree" id="ENSGT00730000111085"/>
<dbReference type="HOGENOM" id="CLU_039466_1_0_1"/>
<dbReference type="InParanoid" id="Q7JVL3"/>
<dbReference type="OMA" id="HTYWKEQ"/>
<dbReference type="OrthoDB" id="190958at2759"/>
<dbReference type="PhylomeDB" id="Q7JVL3"/>
<dbReference type="BioGRID-ORCS" id="35934">
    <property type="hits" value="0 hits in 1 CRISPR screen"/>
</dbReference>
<dbReference type="GenomeRNAi" id="35934"/>
<dbReference type="PRO" id="PR:Q7JVL3"/>
<dbReference type="Proteomes" id="UP000000803">
    <property type="component" value="Chromosome 2R"/>
</dbReference>
<dbReference type="Bgee" id="FBgn0050342">
    <property type="expression patterns" value="Expressed in T neuron T5a (Drosophila) in embryonic/larval optic lobe (Drosophila) and 98 other cell types or tissues"/>
</dbReference>
<dbReference type="GO" id="GO:0071013">
    <property type="term" value="C:catalytic step 2 spliceosome"/>
    <property type="evidence" value="ECO:0007005"/>
    <property type="project" value="FlyBase"/>
</dbReference>
<dbReference type="GO" id="GO:0071011">
    <property type="term" value="C:precatalytic spliceosome"/>
    <property type="evidence" value="ECO:0007005"/>
    <property type="project" value="FlyBase"/>
</dbReference>
<dbReference type="GO" id="GO:0032991">
    <property type="term" value="C:protein-containing complex"/>
    <property type="evidence" value="ECO:0000353"/>
    <property type="project" value="FlyBase"/>
</dbReference>
<dbReference type="GO" id="GO:0000398">
    <property type="term" value="P:mRNA splicing, via spliceosome"/>
    <property type="evidence" value="ECO:0000315"/>
    <property type="project" value="FlyBase"/>
</dbReference>
<dbReference type="GO" id="GO:0010389">
    <property type="term" value="P:regulation of G2/M transition of mitotic cell cycle"/>
    <property type="evidence" value="ECO:0000315"/>
    <property type="project" value="FlyBase"/>
</dbReference>
<dbReference type="InterPro" id="IPR005037">
    <property type="entry name" value="PRP38"/>
</dbReference>
<dbReference type="InterPro" id="IPR024767">
    <property type="entry name" value="PRP38_C"/>
</dbReference>
<dbReference type="PANTHER" id="PTHR23142">
    <property type="entry name" value="PRE-MRNA-SPLICING FACTOR 38A-RELATED"/>
    <property type="match status" value="1"/>
</dbReference>
<dbReference type="Pfam" id="PF03371">
    <property type="entry name" value="PRP38"/>
    <property type="match status" value="1"/>
</dbReference>
<dbReference type="Pfam" id="PF12871">
    <property type="entry name" value="PRP38_assoc"/>
    <property type="match status" value="1"/>
</dbReference>
<comment type="function">
    <text evidence="2 6">Required for pre-mRNA splicing.</text>
</comment>
<comment type="subunit">
    <text evidence="2 3">Component of the spliceosome C complex (PubMed:18981222). Interacts with Mfap1 (via C-terminus) (PubMed:18765666).</text>
</comment>
<comment type="interaction">
    <interactant intactId="EBI-118629">
        <id>Q7JVL3</id>
    </interactant>
    <interactant intactId="EBI-193121">
        <id>Q9W062</id>
        <label>Mfap1</label>
    </interactant>
    <organismsDiffer>false</organismsDiffer>
    <experiments>2</experiments>
</comment>
<comment type="subcellular location">
    <subcellularLocation>
        <location evidence="2 3 4">Nucleus</location>
    </subcellularLocation>
</comment>
<comment type="tissue specificity">
    <text evidence="4">Detected in all germal and follicle cells.</text>
</comment>
<comment type="similarity">
    <text evidence="5">Belongs to the PRP38 family.</text>
</comment>
<organism evidence="9">
    <name type="scientific">Drosophila melanogaster</name>
    <name type="common">Fruit fly</name>
    <dbReference type="NCBI Taxonomy" id="7227"/>
    <lineage>
        <taxon>Eukaryota</taxon>
        <taxon>Metazoa</taxon>
        <taxon>Ecdysozoa</taxon>
        <taxon>Arthropoda</taxon>
        <taxon>Hexapoda</taxon>
        <taxon>Insecta</taxon>
        <taxon>Pterygota</taxon>
        <taxon>Neoptera</taxon>
        <taxon>Endopterygota</taxon>
        <taxon>Diptera</taxon>
        <taxon>Brachycera</taxon>
        <taxon>Muscomorpha</taxon>
        <taxon>Ephydroidea</taxon>
        <taxon>Drosophilidae</taxon>
        <taxon>Drosophila</taxon>
        <taxon>Sophophora</taxon>
    </lineage>
</organism>
<evidence type="ECO:0000256" key="1">
    <source>
        <dbReference type="SAM" id="MobiDB-lite"/>
    </source>
</evidence>
<evidence type="ECO:0000269" key="2">
    <source>
    </source>
</evidence>
<evidence type="ECO:0000269" key="3">
    <source>
    </source>
</evidence>
<evidence type="ECO:0000269" key="4">
    <source>
    </source>
</evidence>
<evidence type="ECO:0000305" key="5"/>
<evidence type="ECO:0000305" key="6">
    <source>
    </source>
</evidence>
<evidence type="ECO:0000312" key="7">
    <source>
        <dbReference type="EMBL" id="AAM50703.1"/>
    </source>
</evidence>
<evidence type="ECO:0000312" key="8">
    <source>
        <dbReference type="FlyBase" id="FBgn0050342"/>
    </source>
</evidence>
<evidence type="ECO:0000312" key="9">
    <source>
        <dbReference type="Proteomes" id="UP000000803"/>
    </source>
</evidence>
<accession>Q7JVL3</accession>